<keyword id="KW-0150">Chloroplast</keyword>
<keyword id="KW-0251">Elongation factor</keyword>
<keyword id="KW-0342">GTP-binding</keyword>
<keyword id="KW-0378">Hydrolase</keyword>
<keyword id="KW-0547">Nucleotide-binding</keyword>
<keyword id="KW-0934">Plastid</keyword>
<keyword id="KW-0648">Protein biosynthesis</keyword>
<geneLocation type="chloroplast"/>
<protein>
    <recommendedName>
        <fullName>Elongation factor Tu, chloroplastic</fullName>
        <shortName>EF-Tu</shortName>
        <ecNumber evidence="2">3.6.5.3</ecNumber>
    </recommendedName>
</protein>
<dbReference type="EC" id="3.6.5.3" evidence="2"/>
<dbReference type="EMBL" id="U09436">
    <property type="protein sequence ID" value="AAA87691.1"/>
    <property type="molecule type" value="Genomic_DNA"/>
</dbReference>
<dbReference type="SMR" id="P50377"/>
<dbReference type="GO" id="GO:0009507">
    <property type="term" value="C:chloroplast"/>
    <property type="evidence" value="ECO:0007669"/>
    <property type="project" value="UniProtKB-SubCell"/>
</dbReference>
<dbReference type="GO" id="GO:0005829">
    <property type="term" value="C:cytosol"/>
    <property type="evidence" value="ECO:0007669"/>
    <property type="project" value="TreeGrafter"/>
</dbReference>
<dbReference type="GO" id="GO:0005525">
    <property type="term" value="F:GTP binding"/>
    <property type="evidence" value="ECO:0007669"/>
    <property type="project" value="UniProtKB-KW"/>
</dbReference>
<dbReference type="GO" id="GO:0003924">
    <property type="term" value="F:GTPase activity"/>
    <property type="evidence" value="ECO:0007669"/>
    <property type="project" value="InterPro"/>
</dbReference>
<dbReference type="GO" id="GO:0003746">
    <property type="term" value="F:translation elongation factor activity"/>
    <property type="evidence" value="ECO:0007669"/>
    <property type="project" value="UniProtKB-KW"/>
</dbReference>
<dbReference type="CDD" id="cd03697">
    <property type="entry name" value="EFTU_II"/>
    <property type="match status" value="1"/>
</dbReference>
<dbReference type="FunFam" id="2.40.30.10:FF:000001">
    <property type="entry name" value="Elongation factor Tu"/>
    <property type="match status" value="1"/>
</dbReference>
<dbReference type="Gene3D" id="3.40.50.300">
    <property type="entry name" value="P-loop containing nucleotide triphosphate hydrolases"/>
    <property type="match status" value="1"/>
</dbReference>
<dbReference type="Gene3D" id="2.40.30.10">
    <property type="entry name" value="Translation factors"/>
    <property type="match status" value="1"/>
</dbReference>
<dbReference type="InterPro" id="IPR050055">
    <property type="entry name" value="EF-Tu_GTPase"/>
</dbReference>
<dbReference type="InterPro" id="IPR004161">
    <property type="entry name" value="EFTu-like_2"/>
</dbReference>
<dbReference type="InterPro" id="IPR033720">
    <property type="entry name" value="EFTU_2"/>
</dbReference>
<dbReference type="InterPro" id="IPR027417">
    <property type="entry name" value="P-loop_NTPase"/>
</dbReference>
<dbReference type="InterPro" id="IPR000795">
    <property type="entry name" value="T_Tr_GTP-bd_dom"/>
</dbReference>
<dbReference type="InterPro" id="IPR009000">
    <property type="entry name" value="Transl_B-barrel_sf"/>
</dbReference>
<dbReference type="PANTHER" id="PTHR43721:SF22">
    <property type="entry name" value="ELONGATION FACTOR TU, MITOCHONDRIAL"/>
    <property type="match status" value="1"/>
</dbReference>
<dbReference type="PANTHER" id="PTHR43721">
    <property type="entry name" value="ELONGATION FACTOR TU-RELATED"/>
    <property type="match status" value="1"/>
</dbReference>
<dbReference type="Pfam" id="PF00009">
    <property type="entry name" value="GTP_EFTU"/>
    <property type="match status" value="1"/>
</dbReference>
<dbReference type="Pfam" id="PF03144">
    <property type="entry name" value="GTP_EFTU_D2"/>
    <property type="match status" value="1"/>
</dbReference>
<dbReference type="PRINTS" id="PR00315">
    <property type="entry name" value="ELONGATNFCT"/>
</dbReference>
<dbReference type="SUPFAM" id="SSF52540">
    <property type="entry name" value="P-loop containing nucleoside triphosphate hydrolases"/>
    <property type="match status" value="1"/>
</dbReference>
<dbReference type="SUPFAM" id="SSF50447">
    <property type="entry name" value="Translation proteins"/>
    <property type="match status" value="1"/>
</dbReference>
<dbReference type="PROSITE" id="PS51722">
    <property type="entry name" value="G_TR_2"/>
    <property type="match status" value="1"/>
</dbReference>
<name>EFTU_GRALE</name>
<accession>P50377</accession>
<organism>
    <name type="scientific">Gracilariopsis lemaneiformis</name>
    <name type="common">Red alga</name>
    <name type="synonym">Gracilaria lemaneiformis</name>
    <dbReference type="NCBI Taxonomy" id="2782"/>
    <lineage>
        <taxon>Eukaryota</taxon>
        <taxon>Rhodophyta</taxon>
        <taxon>Florideophyceae</taxon>
        <taxon>Rhodymeniophycidae</taxon>
        <taxon>Gracilariales</taxon>
        <taxon>Gracilariaceae</taxon>
        <taxon>Gracilariopsis</taxon>
    </lineage>
</organism>
<feature type="chain" id="PRO_0000091460" description="Elongation factor Tu, chloroplastic">
    <location>
        <begin position="1" status="less than"/>
        <end position="235" status="greater than"/>
    </location>
</feature>
<feature type="domain" description="tr-type G" evidence="3">
    <location>
        <begin position="1" status="less than"/>
        <end position="125"/>
    </location>
</feature>
<feature type="binding site" evidence="1">
    <location>
        <begin position="47"/>
        <end position="50"/>
    </location>
    <ligand>
        <name>GTP</name>
        <dbReference type="ChEBI" id="CHEBI:37565"/>
    </ligand>
</feature>
<feature type="non-terminal residue">
    <location>
        <position position="1"/>
    </location>
</feature>
<feature type="non-terminal residue">
    <location>
        <position position="235"/>
    </location>
</feature>
<reference key="1">
    <citation type="journal article" date="1995" name="Mol. Phylogenet. Evol.">
        <title>Phylogenetic analysis of tufA sequences indicates a cyanobacterial origin of all plastids.</title>
        <authorList>
            <person name="Delwiche C.F."/>
            <person name="Kuhsel M."/>
            <person name="Palmer J.D."/>
        </authorList>
    </citation>
    <scope>NUCLEOTIDE SEQUENCE [GENOMIC DNA]</scope>
</reference>
<evidence type="ECO:0000250" key="1"/>
<evidence type="ECO:0000255" key="2">
    <source>
        <dbReference type="HAMAP-Rule" id="MF_00118"/>
    </source>
</evidence>
<evidence type="ECO:0000255" key="3">
    <source>
        <dbReference type="PROSITE-ProRule" id="PRU01059"/>
    </source>
</evidence>
<sequence length="235" mass="25804">KNMITGAAQMDGAILVVSAADGPMPQTREHILLAKQVGVPNIVVFLNKQDQVDDEELLELVELEVRELLGQYGFPGDNIPFVAGSALRALENITQNNTIQRGENEWVDKIHSLMDAVDEYIPTPVRDVEKTFLMAVEDVFSITGRGTVTTGRIERGIIKVGDTIEIVGLRETTTTTITGLEMFQKTLDEGMAGDNIGILLRGVQKKDIERGMVLAQPGTITPHTQFEAEVYVLTK</sequence>
<comment type="function">
    <text evidence="2">GTP hydrolase that promotes the GTP-dependent binding of aminoacyl-tRNA to the A-site of ribosomes during protein biosynthesis.</text>
</comment>
<comment type="catalytic activity">
    <reaction evidence="2">
        <text>GTP + H2O = GDP + phosphate + H(+)</text>
        <dbReference type="Rhea" id="RHEA:19669"/>
        <dbReference type="ChEBI" id="CHEBI:15377"/>
        <dbReference type="ChEBI" id="CHEBI:15378"/>
        <dbReference type="ChEBI" id="CHEBI:37565"/>
        <dbReference type="ChEBI" id="CHEBI:43474"/>
        <dbReference type="ChEBI" id="CHEBI:58189"/>
        <dbReference type="EC" id="3.6.5.3"/>
    </reaction>
    <physiologicalReaction direction="left-to-right" evidence="2">
        <dbReference type="Rhea" id="RHEA:19670"/>
    </physiologicalReaction>
</comment>
<comment type="subcellular location">
    <subcellularLocation>
        <location>Plastid</location>
        <location>Chloroplast</location>
    </subcellularLocation>
</comment>
<comment type="similarity">
    <text evidence="3">Belongs to the TRAFAC class translation factor GTPase superfamily. Classic translation factor GTPase family. EF-Tu/EF-1A subfamily.</text>
</comment>
<proteinExistence type="inferred from homology"/>
<gene>
    <name type="primary">tufA</name>
</gene>